<gene>
    <name type="primary">helD</name>
    <name type="synonym">ccmD</name>
    <name type="ordered locus">RCAP_rcc01788</name>
</gene>
<proteinExistence type="inferred from homology"/>
<feature type="chain" id="PRO_0000201571" description="Heme exporter protein D">
    <location>
        <begin position="1"/>
        <end position="52"/>
    </location>
</feature>
<feature type="transmembrane region" description="Helical" evidence="1">
    <location>
        <begin position="12"/>
        <end position="32"/>
    </location>
</feature>
<protein>
    <recommendedName>
        <fullName>Heme exporter protein D</fullName>
    </recommendedName>
    <alternativeName>
        <fullName>Cytochrome c-type biogenesis protein HelD</fullName>
    </alternativeName>
</protein>
<evidence type="ECO:0000255" key="1"/>
<evidence type="ECO:0000305" key="2"/>
<organism>
    <name type="scientific">Rhodobacter capsulatus (strain ATCC BAA-309 / NBRC 16581 / SB1003)</name>
    <dbReference type="NCBI Taxonomy" id="272942"/>
    <lineage>
        <taxon>Bacteria</taxon>
        <taxon>Pseudomonadati</taxon>
        <taxon>Pseudomonadota</taxon>
        <taxon>Alphaproteobacteria</taxon>
        <taxon>Rhodobacterales</taxon>
        <taxon>Rhodobacter group</taxon>
        <taxon>Rhodobacter</taxon>
    </lineage>
</organism>
<keyword id="KW-0997">Cell inner membrane</keyword>
<keyword id="KW-1003">Cell membrane</keyword>
<keyword id="KW-0201">Cytochrome c-type biogenesis</keyword>
<keyword id="KW-0472">Membrane</keyword>
<keyword id="KW-1185">Reference proteome</keyword>
<keyword id="KW-0812">Transmembrane</keyword>
<keyword id="KW-1133">Transmembrane helix</keyword>
<keyword id="KW-0813">Transport</keyword>
<dbReference type="EMBL" id="X63462">
    <property type="protein sequence ID" value="CAA45064.1"/>
    <property type="status" value="ALT_INIT"/>
    <property type="molecule type" value="Genomic_DNA"/>
</dbReference>
<dbReference type="EMBL" id="M96013">
    <property type="protein sequence ID" value="AAA03177.1"/>
    <property type="molecule type" value="Unassigned_DNA"/>
</dbReference>
<dbReference type="EMBL" id="CP001312">
    <property type="protein sequence ID" value="ADE85533.1"/>
    <property type="molecule type" value="Genomic_DNA"/>
</dbReference>
<dbReference type="PIR" id="B47384">
    <property type="entry name" value="B47384"/>
</dbReference>
<dbReference type="RefSeq" id="WP_013067512.1">
    <property type="nucleotide sequence ID" value="NC_014034.1"/>
</dbReference>
<dbReference type="SMR" id="P29963"/>
<dbReference type="STRING" id="272942.RCAP_rcc01788"/>
<dbReference type="GeneID" id="31490663"/>
<dbReference type="KEGG" id="rcp:RCAP_rcc01788"/>
<dbReference type="HOGENOM" id="CLU_214404_0_0_5"/>
<dbReference type="OrthoDB" id="7874534at2"/>
<dbReference type="Proteomes" id="UP000002361">
    <property type="component" value="Chromosome"/>
</dbReference>
<dbReference type="GO" id="GO:0005886">
    <property type="term" value="C:plasma membrane"/>
    <property type="evidence" value="ECO:0007669"/>
    <property type="project" value="UniProtKB-SubCell"/>
</dbReference>
<dbReference type="GO" id="GO:0017004">
    <property type="term" value="P:cytochrome complex assembly"/>
    <property type="evidence" value="ECO:0007669"/>
    <property type="project" value="UniProtKB-KW"/>
</dbReference>
<dbReference type="GO" id="GO:0015886">
    <property type="term" value="P:heme transport"/>
    <property type="evidence" value="ECO:0007669"/>
    <property type="project" value="InterPro"/>
</dbReference>
<dbReference type="InterPro" id="IPR007078">
    <property type="entry name" value="Haem_export_protD_CcmD"/>
</dbReference>
<dbReference type="NCBIfam" id="TIGR03141">
    <property type="entry name" value="cytochro_ccmD"/>
    <property type="match status" value="1"/>
</dbReference>
<dbReference type="Pfam" id="PF04995">
    <property type="entry name" value="CcmD"/>
    <property type="match status" value="1"/>
</dbReference>
<comment type="function">
    <text evidence="2">Required for the export of heme to the periplasm for the biogenesis of c-type cytochromes.</text>
</comment>
<comment type="subcellular location">
    <subcellularLocation>
        <location evidence="2">Cell inner membrane</location>
        <topology evidence="2">Single-pass membrane protein</topology>
    </subcellularLocation>
</comment>
<comment type="similarity">
    <text evidence="2">Belongs to the CcmD/CycX/HelD family.</text>
</comment>
<comment type="sequence caution" evidence="2">
    <conflict type="erroneous initiation">
        <sequence resource="EMBL-CDS" id="CAA45064"/>
    </conflict>
</comment>
<reference key="1">
    <citation type="journal article" date="1992" name="Genes Dev.">
        <title>Bacterial cytochromes c biogenesis.</title>
        <authorList>
            <person name="Beckman D.L."/>
            <person name="Trawick D.R."/>
            <person name="Kranz R.G."/>
        </authorList>
    </citation>
    <scope>NUCLEOTIDE SEQUENCE [GENOMIC DNA]</scope>
    <source>
        <strain>ATCC BAA-309 / NBRC 16581 / SB1003</strain>
    </source>
</reference>
<reference key="2">
    <citation type="journal article" date="1993" name="Proc. Natl. Acad. Sci. U.S.A.">
        <title>Cytochromes c biogenesis in a photosynthetic bacterium requires a periplasmic thioredoxin-like protein.</title>
        <authorList>
            <person name="Beckman D.L."/>
            <person name="Kranz R.G."/>
        </authorList>
    </citation>
    <scope>NUCLEOTIDE SEQUENCE [GENOMIC DNA]</scope>
    <source>
        <strain>ATCC BAA-309 / NBRC 16581 / SB1003</strain>
    </source>
</reference>
<reference key="3">
    <citation type="journal article" date="2010" name="J. Bacteriol.">
        <title>Complete genome sequence of the photosynthetic purple nonsulfur bacterium Rhodobacter capsulatus SB 1003.</title>
        <authorList>
            <person name="Strnad H."/>
            <person name="Lapidus A."/>
            <person name="Paces J."/>
            <person name="Ulbrich P."/>
            <person name="Vlcek C."/>
            <person name="Paces V."/>
            <person name="Haselkorn R."/>
        </authorList>
    </citation>
    <scope>NUCLEOTIDE SEQUENCE [LARGE SCALE GENOMIC DNA]</scope>
    <source>
        <strain>ATCC BAA-309 / NBRC 16581 / SB1003</strain>
    </source>
</reference>
<name>CCMD_RHOCB</name>
<accession>P29963</accession>
<accession>D5AU94</accession>
<sequence length="52" mass="5604">MMPEFGKYAVTILASWGATLVLLAGLIAATLIRGAQVKRALKAQEERMKNDG</sequence>